<gene>
    <name evidence="1" type="primary">dapE</name>
    <name type="ordered locus">ECH_0144</name>
</gene>
<name>DAPE_EHRCR</name>
<proteinExistence type="inferred from homology"/>
<protein>
    <recommendedName>
        <fullName evidence="1">Succinyl-diaminopimelate desuccinylase</fullName>
        <shortName evidence="1">SDAP desuccinylase</shortName>
        <ecNumber evidence="1">3.5.1.18</ecNumber>
    </recommendedName>
    <alternativeName>
        <fullName evidence="1">N-succinyl-LL-2,6-diaminoheptanedioate amidohydrolase</fullName>
    </alternativeName>
</protein>
<comment type="function">
    <text evidence="1">Catalyzes the hydrolysis of N-succinyl-L,L-diaminopimelic acid (SDAP), forming succinate and LL-2,6-diaminopimelate (DAP), an intermediate involved in the bacterial biosynthesis of lysine and meso-diaminopimelic acid, an essential component of bacterial cell walls.</text>
</comment>
<comment type="catalytic activity">
    <reaction evidence="1">
        <text>N-succinyl-(2S,6S)-2,6-diaminopimelate + H2O = (2S,6S)-2,6-diaminopimelate + succinate</text>
        <dbReference type="Rhea" id="RHEA:22608"/>
        <dbReference type="ChEBI" id="CHEBI:15377"/>
        <dbReference type="ChEBI" id="CHEBI:30031"/>
        <dbReference type="ChEBI" id="CHEBI:57609"/>
        <dbReference type="ChEBI" id="CHEBI:58087"/>
        <dbReference type="EC" id="3.5.1.18"/>
    </reaction>
</comment>
<comment type="cofactor">
    <cofactor evidence="1">
        <name>Zn(2+)</name>
        <dbReference type="ChEBI" id="CHEBI:29105"/>
    </cofactor>
    <cofactor evidence="1">
        <name>Co(2+)</name>
        <dbReference type="ChEBI" id="CHEBI:48828"/>
    </cofactor>
    <text evidence="1">Binds 2 Zn(2+) or Co(2+) ions per subunit.</text>
</comment>
<comment type="pathway">
    <text evidence="1">Amino-acid biosynthesis; L-lysine biosynthesis via DAP pathway; LL-2,6-diaminopimelate from (S)-tetrahydrodipicolinate (succinylase route): step 3/3.</text>
</comment>
<comment type="subunit">
    <text evidence="1">Homodimer.</text>
</comment>
<comment type="similarity">
    <text evidence="1">Belongs to the peptidase M20A family. DapE subfamily.</text>
</comment>
<reference key="1">
    <citation type="journal article" date="2006" name="PLoS Genet.">
        <title>Comparative genomics of emerging human ehrlichiosis agents.</title>
        <authorList>
            <person name="Dunning Hotopp J.C."/>
            <person name="Lin M."/>
            <person name="Madupu R."/>
            <person name="Crabtree J."/>
            <person name="Angiuoli S.V."/>
            <person name="Eisen J.A."/>
            <person name="Seshadri R."/>
            <person name="Ren Q."/>
            <person name="Wu M."/>
            <person name="Utterback T.R."/>
            <person name="Smith S."/>
            <person name="Lewis M."/>
            <person name="Khouri H."/>
            <person name="Zhang C."/>
            <person name="Niu H."/>
            <person name="Lin Q."/>
            <person name="Ohashi N."/>
            <person name="Zhi N."/>
            <person name="Nelson W.C."/>
            <person name="Brinkac L.M."/>
            <person name="Dodson R.J."/>
            <person name="Rosovitz M.J."/>
            <person name="Sundaram J.P."/>
            <person name="Daugherty S.C."/>
            <person name="Davidsen T."/>
            <person name="Durkin A.S."/>
            <person name="Gwinn M.L."/>
            <person name="Haft D.H."/>
            <person name="Selengut J.D."/>
            <person name="Sullivan S.A."/>
            <person name="Zafar N."/>
            <person name="Zhou L."/>
            <person name="Benahmed F."/>
            <person name="Forberger H."/>
            <person name="Halpin R."/>
            <person name="Mulligan S."/>
            <person name="Robinson J."/>
            <person name="White O."/>
            <person name="Rikihisa Y."/>
            <person name="Tettelin H."/>
        </authorList>
    </citation>
    <scope>NUCLEOTIDE SEQUENCE [LARGE SCALE GENOMIC DNA]</scope>
    <source>
        <strain>ATCC CRL-10679 / Arkansas</strain>
    </source>
</reference>
<organism>
    <name type="scientific">Ehrlichia chaffeensis (strain ATCC CRL-10679 / Arkansas)</name>
    <dbReference type="NCBI Taxonomy" id="205920"/>
    <lineage>
        <taxon>Bacteria</taxon>
        <taxon>Pseudomonadati</taxon>
        <taxon>Pseudomonadota</taxon>
        <taxon>Alphaproteobacteria</taxon>
        <taxon>Rickettsiales</taxon>
        <taxon>Anaplasmataceae</taxon>
        <taxon>Ehrlichia</taxon>
    </lineage>
</organism>
<accession>Q2GHW1</accession>
<dbReference type="EC" id="3.5.1.18" evidence="1"/>
<dbReference type="EMBL" id="CP000236">
    <property type="protein sequence ID" value="ABD45523.1"/>
    <property type="molecule type" value="Genomic_DNA"/>
</dbReference>
<dbReference type="RefSeq" id="WP_011452427.1">
    <property type="nucleotide sequence ID" value="NC_007799.1"/>
</dbReference>
<dbReference type="SMR" id="Q2GHW1"/>
<dbReference type="STRING" id="205920.ECH_0144"/>
<dbReference type="KEGG" id="ech:ECH_0144"/>
<dbReference type="eggNOG" id="COG0624">
    <property type="taxonomic scope" value="Bacteria"/>
</dbReference>
<dbReference type="HOGENOM" id="CLU_021802_4_0_5"/>
<dbReference type="OrthoDB" id="9809784at2"/>
<dbReference type="UniPathway" id="UPA00034">
    <property type="reaction ID" value="UER00021"/>
</dbReference>
<dbReference type="Proteomes" id="UP000008320">
    <property type="component" value="Chromosome"/>
</dbReference>
<dbReference type="GO" id="GO:0008777">
    <property type="term" value="F:acetylornithine deacetylase activity"/>
    <property type="evidence" value="ECO:0007669"/>
    <property type="project" value="TreeGrafter"/>
</dbReference>
<dbReference type="GO" id="GO:0050897">
    <property type="term" value="F:cobalt ion binding"/>
    <property type="evidence" value="ECO:0007669"/>
    <property type="project" value="UniProtKB-UniRule"/>
</dbReference>
<dbReference type="GO" id="GO:0009014">
    <property type="term" value="F:succinyl-diaminopimelate desuccinylase activity"/>
    <property type="evidence" value="ECO:0007669"/>
    <property type="project" value="UniProtKB-UniRule"/>
</dbReference>
<dbReference type="GO" id="GO:0008270">
    <property type="term" value="F:zinc ion binding"/>
    <property type="evidence" value="ECO:0007669"/>
    <property type="project" value="UniProtKB-UniRule"/>
</dbReference>
<dbReference type="GO" id="GO:0019877">
    <property type="term" value="P:diaminopimelate biosynthetic process"/>
    <property type="evidence" value="ECO:0007669"/>
    <property type="project" value="UniProtKB-UniRule"/>
</dbReference>
<dbReference type="GO" id="GO:0006526">
    <property type="term" value="P:L-arginine biosynthetic process"/>
    <property type="evidence" value="ECO:0007669"/>
    <property type="project" value="TreeGrafter"/>
</dbReference>
<dbReference type="GO" id="GO:0009089">
    <property type="term" value="P:lysine biosynthetic process via diaminopimelate"/>
    <property type="evidence" value="ECO:0007669"/>
    <property type="project" value="UniProtKB-UniRule"/>
</dbReference>
<dbReference type="CDD" id="cd03891">
    <property type="entry name" value="M20_DapE_proteobac"/>
    <property type="match status" value="1"/>
</dbReference>
<dbReference type="Gene3D" id="3.40.630.10">
    <property type="entry name" value="Zn peptidases"/>
    <property type="match status" value="2"/>
</dbReference>
<dbReference type="HAMAP" id="MF_01690">
    <property type="entry name" value="DapE"/>
    <property type="match status" value="1"/>
</dbReference>
<dbReference type="InterPro" id="IPR001261">
    <property type="entry name" value="ArgE/DapE_CS"/>
</dbReference>
<dbReference type="InterPro" id="IPR036264">
    <property type="entry name" value="Bact_exopeptidase_dim_dom"/>
</dbReference>
<dbReference type="InterPro" id="IPR005941">
    <property type="entry name" value="DapE_proteobac"/>
</dbReference>
<dbReference type="InterPro" id="IPR002933">
    <property type="entry name" value="Peptidase_M20"/>
</dbReference>
<dbReference type="InterPro" id="IPR011650">
    <property type="entry name" value="Peptidase_M20_dimer"/>
</dbReference>
<dbReference type="InterPro" id="IPR050072">
    <property type="entry name" value="Peptidase_M20A"/>
</dbReference>
<dbReference type="NCBIfam" id="TIGR01246">
    <property type="entry name" value="dapE_proteo"/>
    <property type="match status" value="1"/>
</dbReference>
<dbReference type="NCBIfam" id="NF009557">
    <property type="entry name" value="PRK13009.1"/>
    <property type="match status" value="1"/>
</dbReference>
<dbReference type="PANTHER" id="PTHR43808">
    <property type="entry name" value="ACETYLORNITHINE DEACETYLASE"/>
    <property type="match status" value="1"/>
</dbReference>
<dbReference type="PANTHER" id="PTHR43808:SF31">
    <property type="entry name" value="N-ACETYL-L-CITRULLINE DEACETYLASE"/>
    <property type="match status" value="1"/>
</dbReference>
<dbReference type="Pfam" id="PF07687">
    <property type="entry name" value="M20_dimer"/>
    <property type="match status" value="1"/>
</dbReference>
<dbReference type="Pfam" id="PF01546">
    <property type="entry name" value="Peptidase_M20"/>
    <property type="match status" value="1"/>
</dbReference>
<dbReference type="SUPFAM" id="SSF55031">
    <property type="entry name" value="Bacterial exopeptidase dimerisation domain"/>
    <property type="match status" value="1"/>
</dbReference>
<dbReference type="SUPFAM" id="SSF53187">
    <property type="entry name" value="Zn-dependent exopeptidases"/>
    <property type="match status" value="1"/>
</dbReference>
<dbReference type="PROSITE" id="PS00759">
    <property type="entry name" value="ARGE_DAPE_CPG2_2"/>
    <property type="match status" value="1"/>
</dbReference>
<sequence length="381" mass="41816">MAIDPVILSQELISFPSITPTDNGAIDFLSNTLSQYGFTCNVLTFGNDEVQVCNLYAQLGNGHPNLCFAGHTDVVPTGDLEKWKFDPFSGHIEDNILYGRGAVDMKSAICAFIAAVSRIDFNQVNGAISLMISGDEEGNHFKYGTPAILKWLTDNNKKIDYCLVGEPTSKSSVGDTIKIGRRGSINFKIVCNGVQGHVAYPHLAQNPINDMINILHKINNTVLDEGNEYFQPSNCEITSVDVGNTANNVIPGTVTAHLNIRYNNIHTSESLFNIINNICAETTQKYQIFTSLSGDPFINYPDKYSDMLSAAIKKTTGETAVISTSGGTSDARFIKDFCPVIELGLKNDTAHKINENTSVDDINKLANIYEEFIKQFFNISQ</sequence>
<keyword id="KW-0028">Amino-acid biosynthesis</keyword>
<keyword id="KW-0170">Cobalt</keyword>
<keyword id="KW-0220">Diaminopimelate biosynthesis</keyword>
<keyword id="KW-0378">Hydrolase</keyword>
<keyword id="KW-0457">Lysine biosynthesis</keyword>
<keyword id="KW-0479">Metal-binding</keyword>
<keyword id="KW-1185">Reference proteome</keyword>
<keyword id="KW-0862">Zinc</keyword>
<feature type="chain" id="PRO_0000375545" description="Succinyl-diaminopimelate desuccinylase">
    <location>
        <begin position="1"/>
        <end position="381"/>
    </location>
</feature>
<feature type="active site" evidence="1">
    <location>
        <position position="73"/>
    </location>
</feature>
<feature type="active site" description="Proton acceptor" evidence="1">
    <location>
        <position position="136"/>
    </location>
</feature>
<feature type="binding site" evidence="1">
    <location>
        <position position="71"/>
    </location>
    <ligand>
        <name>Zn(2+)</name>
        <dbReference type="ChEBI" id="CHEBI:29105"/>
        <label>1</label>
    </ligand>
</feature>
<feature type="binding site" evidence="1">
    <location>
        <position position="104"/>
    </location>
    <ligand>
        <name>Zn(2+)</name>
        <dbReference type="ChEBI" id="CHEBI:29105"/>
        <label>1</label>
    </ligand>
</feature>
<feature type="binding site" evidence="1">
    <location>
        <position position="104"/>
    </location>
    <ligand>
        <name>Zn(2+)</name>
        <dbReference type="ChEBI" id="CHEBI:29105"/>
        <label>2</label>
    </ligand>
</feature>
<feature type="binding site" evidence="1">
    <location>
        <position position="137"/>
    </location>
    <ligand>
        <name>Zn(2+)</name>
        <dbReference type="ChEBI" id="CHEBI:29105"/>
        <label>2</label>
    </ligand>
</feature>
<feature type="binding site" evidence="1">
    <location>
        <position position="166"/>
    </location>
    <ligand>
        <name>Zn(2+)</name>
        <dbReference type="ChEBI" id="CHEBI:29105"/>
        <label>1</label>
    </ligand>
</feature>
<feature type="binding site" evidence="1">
    <location>
        <position position="351"/>
    </location>
    <ligand>
        <name>Zn(2+)</name>
        <dbReference type="ChEBI" id="CHEBI:29105"/>
        <label>2</label>
    </ligand>
</feature>
<evidence type="ECO:0000255" key="1">
    <source>
        <dbReference type="HAMAP-Rule" id="MF_01690"/>
    </source>
</evidence>